<keyword id="KW-0210">Decarboxylase</keyword>
<keyword id="KW-0456">Lyase</keyword>
<keyword id="KW-0665">Pyrimidine biosynthesis</keyword>
<protein>
    <recommendedName>
        <fullName evidence="1">Orotidine 5'-phosphate decarboxylase</fullName>
        <ecNumber evidence="1">4.1.1.23</ecNumber>
    </recommendedName>
    <alternativeName>
        <fullName evidence="1">OMP decarboxylase</fullName>
        <shortName evidence="1">OMPDCase</shortName>
        <shortName evidence="1">OMPdecase</shortName>
    </alternativeName>
</protein>
<gene>
    <name evidence="1" type="primary">pyrF</name>
    <name type="ordered locus">PYRAB13190</name>
    <name type="ORF">PAB1505</name>
</gene>
<name>PYRF_PYRAB</name>
<reference key="1">
    <citation type="journal article" date="2003" name="Mol. Microbiol.">
        <title>An integrated analysis of the genome of the hyperthermophilic archaeon Pyrococcus abyssi.</title>
        <authorList>
            <person name="Cohen G.N."/>
            <person name="Barbe V."/>
            <person name="Flament D."/>
            <person name="Galperin M."/>
            <person name="Heilig R."/>
            <person name="Lecompte O."/>
            <person name="Poch O."/>
            <person name="Prieur D."/>
            <person name="Querellou J."/>
            <person name="Ripp R."/>
            <person name="Thierry J.-C."/>
            <person name="Van der Oost J."/>
            <person name="Weissenbach J."/>
            <person name="Zivanovic Y."/>
            <person name="Forterre P."/>
        </authorList>
    </citation>
    <scope>NUCLEOTIDE SEQUENCE [LARGE SCALE GENOMIC DNA]</scope>
    <source>
        <strain>GE5 / Orsay</strain>
    </source>
</reference>
<reference key="2">
    <citation type="journal article" date="2012" name="Curr. Microbiol.">
        <title>Re-annotation of two hyperthermophilic archaea Pyrococcus abyssi GE5 and Pyrococcus furiosus DSM 3638.</title>
        <authorList>
            <person name="Gao J."/>
            <person name="Wang J."/>
        </authorList>
    </citation>
    <scope>GENOME REANNOTATION</scope>
    <source>
        <strain>GE5 / Orsay</strain>
    </source>
</reference>
<accession>Q9UZ35</accession>
<accession>G8ZHC3</accession>
<evidence type="ECO:0000255" key="1">
    <source>
        <dbReference type="HAMAP-Rule" id="MF_01200"/>
    </source>
</evidence>
<feature type="chain" id="PRO_0000134614" description="Orotidine 5'-phosphate decarboxylase">
    <location>
        <begin position="1"/>
        <end position="208"/>
    </location>
</feature>
<feature type="active site" description="Proton donor" evidence="1">
    <location>
        <position position="59"/>
    </location>
</feature>
<feature type="binding site" evidence="1">
    <location>
        <position position="7"/>
    </location>
    <ligand>
        <name>substrate</name>
    </ligand>
</feature>
<feature type="binding site" evidence="1">
    <location>
        <position position="29"/>
    </location>
    <ligand>
        <name>substrate</name>
    </ligand>
</feature>
<feature type="binding site" evidence="1">
    <location>
        <begin position="57"/>
        <end position="66"/>
    </location>
    <ligand>
        <name>substrate</name>
    </ligand>
</feature>
<feature type="binding site" evidence="1">
    <location>
        <position position="109"/>
    </location>
    <ligand>
        <name>substrate</name>
    </ligand>
</feature>
<feature type="binding site" evidence="1">
    <location>
        <begin position="162"/>
        <end position="172"/>
    </location>
    <ligand>
        <name>substrate</name>
    </ligand>
</feature>
<feature type="binding site" evidence="1">
    <location>
        <position position="185"/>
    </location>
    <ligand>
        <name>substrate</name>
    </ligand>
</feature>
<feature type="binding site" evidence="1">
    <location>
        <position position="186"/>
    </location>
    <ligand>
        <name>substrate</name>
    </ligand>
</feature>
<comment type="function">
    <text evidence="1">Catalyzes the decarboxylation of orotidine 5'-monophosphate (OMP) to uridine 5'-monophosphate (UMP).</text>
</comment>
<comment type="catalytic activity">
    <reaction evidence="1">
        <text>orotidine 5'-phosphate + H(+) = UMP + CO2</text>
        <dbReference type="Rhea" id="RHEA:11596"/>
        <dbReference type="ChEBI" id="CHEBI:15378"/>
        <dbReference type="ChEBI" id="CHEBI:16526"/>
        <dbReference type="ChEBI" id="CHEBI:57538"/>
        <dbReference type="ChEBI" id="CHEBI:57865"/>
        <dbReference type="EC" id="4.1.1.23"/>
    </reaction>
</comment>
<comment type="pathway">
    <text evidence="1">Pyrimidine metabolism; UMP biosynthesis via de novo pathway; UMP from orotate: step 2/2.</text>
</comment>
<comment type="subunit">
    <text evidence="1">Homodimer.</text>
</comment>
<comment type="similarity">
    <text evidence="1">Belongs to the OMP decarboxylase family. Type 1 subfamily.</text>
</comment>
<sequence length="208" mass="22991">MIVLALDVYDEDRALKIAEETKDYVAMIKVNWPLIIGSGLDIIRKLKDRTGLKIIADLKLADIPNTNKLIARKVYEAGADYIIVHPFVGRDSVEAVNELGEIILVVEMSHPGALEFINPLTDKFIELANDVEPFGVIAPGTRPERVKYIRERLKEGVKILTPGIGAQGGKAKEAIEAGADYVIVGRSIYNAPNPREAAREIYDEIRGE</sequence>
<organism>
    <name type="scientific">Pyrococcus abyssi (strain GE5 / Orsay)</name>
    <dbReference type="NCBI Taxonomy" id="272844"/>
    <lineage>
        <taxon>Archaea</taxon>
        <taxon>Methanobacteriati</taxon>
        <taxon>Methanobacteriota</taxon>
        <taxon>Thermococci</taxon>
        <taxon>Thermococcales</taxon>
        <taxon>Thermococcaceae</taxon>
        <taxon>Pyrococcus</taxon>
    </lineage>
</organism>
<proteinExistence type="inferred from homology"/>
<dbReference type="EC" id="4.1.1.23" evidence="1"/>
<dbReference type="EMBL" id="AJ248287">
    <property type="protein sequence ID" value="CAB50224.1"/>
    <property type="molecule type" value="Genomic_DNA"/>
</dbReference>
<dbReference type="EMBL" id="HE613800">
    <property type="protein sequence ID" value="CCE70760.1"/>
    <property type="molecule type" value="Genomic_DNA"/>
</dbReference>
<dbReference type="PIR" id="C75041">
    <property type="entry name" value="C75041"/>
</dbReference>
<dbReference type="RefSeq" id="WP_010868434.1">
    <property type="nucleotide sequence ID" value="NC_000868.1"/>
</dbReference>
<dbReference type="SMR" id="Q9UZ35"/>
<dbReference type="STRING" id="272844.PAB1505"/>
<dbReference type="KEGG" id="pab:PAB1505"/>
<dbReference type="PATRIC" id="fig|272844.11.peg.1403"/>
<dbReference type="eggNOG" id="arCOG00081">
    <property type="taxonomic scope" value="Archaea"/>
</dbReference>
<dbReference type="HOGENOM" id="CLU_067069_2_0_2"/>
<dbReference type="OrthoDB" id="94124at2157"/>
<dbReference type="PhylomeDB" id="Q9UZ35"/>
<dbReference type="UniPathway" id="UPA00070">
    <property type="reaction ID" value="UER00120"/>
</dbReference>
<dbReference type="Proteomes" id="UP000000810">
    <property type="component" value="Chromosome"/>
</dbReference>
<dbReference type="Proteomes" id="UP000009139">
    <property type="component" value="Chromosome"/>
</dbReference>
<dbReference type="GO" id="GO:0005829">
    <property type="term" value="C:cytosol"/>
    <property type="evidence" value="ECO:0007669"/>
    <property type="project" value="TreeGrafter"/>
</dbReference>
<dbReference type="GO" id="GO:0004590">
    <property type="term" value="F:orotidine-5'-phosphate decarboxylase activity"/>
    <property type="evidence" value="ECO:0007669"/>
    <property type="project" value="UniProtKB-UniRule"/>
</dbReference>
<dbReference type="GO" id="GO:0006207">
    <property type="term" value="P:'de novo' pyrimidine nucleobase biosynthetic process"/>
    <property type="evidence" value="ECO:0007669"/>
    <property type="project" value="InterPro"/>
</dbReference>
<dbReference type="GO" id="GO:0044205">
    <property type="term" value="P:'de novo' UMP biosynthetic process"/>
    <property type="evidence" value="ECO:0007669"/>
    <property type="project" value="UniProtKB-UniRule"/>
</dbReference>
<dbReference type="CDD" id="cd04725">
    <property type="entry name" value="OMP_decarboxylase_like"/>
    <property type="match status" value="1"/>
</dbReference>
<dbReference type="Gene3D" id="3.20.20.70">
    <property type="entry name" value="Aldolase class I"/>
    <property type="match status" value="1"/>
</dbReference>
<dbReference type="HAMAP" id="MF_01200_A">
    <property type="entry name" value="OMPdecase_type1_A"/>
    <property type="match status" value="1"/>
</dbReference>
<dbReference type="InterPro" id="IPR013785">
    <property type="entry name" value="Aldolase_TIM"/>
</dbReference>
<dbReference type="InterPro" id="IPR014732">
    <property type="entry name" value="OMPdecase"/>
</dbReference>
<dbReference type="InterPro" id="IPR047595">
    <property type="entry name" value="OMPdecase_arc"/>
</dbReference>
<dbReference type="InterPro" id="IPR018089">
    <property type="entry name" value="OMPdecase_AS"/>
</dbReference>
<dbReference type="InterPro" id="IPR001754">
    <property type="entry name" value="OMPdeCOase_dom"/>
</dbReference>
<dbReference type="InterPro" id="IPR011060">
    <property type="entry name" value="RibuloseP-bd_barrel"/>
</dbReference>
<dbReference type="NCBIfam" id="NF010386">
    <property type="entry name" value="PRK13813.1"/>
    <property type="match status" value="1"/>
</dbReference>
<dbReference type="NCBIfam" id="TIGR01740">
    <property type="entry name" value="pyrF"/>
    <property type="match status" value="1"/>
</dbReference>
<dbReference type="PANTHER" id="PTHR32119">
    <property type="entry name" value="OROTIDINE 5'-PHOSPHATE DECARBOXYLASE"/>
    <property type="match status" value="1"/>
</dbReference>
<dbReference type="PANTHER" id="PTHR32119:SF2">
    <property type="entry name" value="OROTIDINE 5'-PHOSPHATE DECARBOXYLASE"/>
    <property type="match status" value="1"/>
</dbReference>
<dbReference type="Pfam" id="PF00215">
    <property type="entry name" value="OMPdecase"/>
    <property type="match status" value="1"/>
</dbReference>
<dbReference type="SMART" id="SM00934">
    <property type="entry name" value="OMPdecase"/>
    <property type="match status" value="1"/>
</dbReference>
<dbReference type="SUPFAM" id="SSF51366">
    <property type="entry name" value="Ribulose-phoshate binding barrel"/>
    <property type="match status" value="1"/>
</dbReference>
<dbReference type="PROSITE" id="PS00156">
    <property type="entry name" value="OMPDECASE"/>
    <property type="match status" value="1"/>
</dbReference>